<name>CA14B_CONQU</name>
<reference key="1">
    <citation type="journal article" date="2007" name="Toxicon">
        <title>From the identification of gene organization of alpha conotoxins to the cloning of novel toxins.</title>
        <authorList>
            <person name="Yuan D.-D."/>
            <person name="Han Y.-H."/>
            <person name="Wang C.-G."/>
            <person name="Chi C.-W."/>
        </authorList>
    </citation>
    <scope>NUCLEOTIDE SEQUENCE [GENOMIC DNA]</scope>
</reference>
<proteinExistence type="inferred from homology"/>
<comment type="function">
    <text evidence="3">Alpha-conotoxins act on postsynaptic membranes, they bind to the nicotinic acetylcholine receptors (nAChR) and thus inhibit them (By similarity). Has possibly a distinct nAChR binding mode from other alpha-conotoxins, due to a different three residue motif (lacks the Ser-Xaa-Pro motif) (By similarity).</text>
</comment>
<comment type="subcellular location">
    <subcellularLocation>
        <location evidence="4">Secreted</location>
    </subcellularLocation>
</comment>
<comment type="tissue specificity">
    <text evidence="4">Expressed by the venom duct.</text>
</comment>
<comment type="domain">
    <text evidence="4">The cysteine framework is I (CC-C-C). Alpha4/7 pattern.</text>
</comment>
<comment type="similarity">
    <text evidence="4">Belongs to the conotoxin A superfamily.</text>
</comment>
<dbReference type="EMBL" id="DQ311069">
    <property type="protein sequence ID" value="ABD33861.1"/>
    <property type="molecule type" value="Genomic_DNA"/>
</dbReference>
<dbReference type="ConoServer" id="559">
    <property type="toxin name" value="Qc1.4b precursor"/>
</dbReference>
<dbReference type="GO" id="GO:0005576">
    <property type="term" value="C:extracellular region"/>
    <property type="evidence" value="ECO:0007669"/>
    <property type="project" value="UniProtKB-SubCell"/>
</dbReference>
<dbReference type="GO" id="GO:0035792">
    <property type="term" value="C:host cell postsynaptic membrane"/>
    <property type="evidence" value="ECO:0007669"/>
    <property type="project" value="UniProtKB-KW"/>
</dbReference>
<dbReference type="GO" id="GO:0030550">
    <property type="term" value="F:acetylcholine receptor inhibitor activity"/>
    <property type="evidence" value="ECO:0007669"/>
    <property type="project" value="UniProtKB-KW"/>
</dbReference>
<dbReference type="GO" id="GO:0099106">
    <property type="term" value="F:ion channel regulator activity"/>
    <property type="evidence" value="ECO:0007669"/>
    <property type="project" value="UniProtKB-KW"/>
</dbReference>
<dbReference type="GO" id="GO:0090729">
    <property type="term" value="F:toxin activity"/>
    <property type="evidence" value="ECO:0007669"/>
    <property type="project" value="UniProtKB-KW"/>
</dbReference>
<dbReference type="InterPro" id="IPR009958">
    <property type="entry name" value="Conotoxin_a-typ"/>
</dbReference>
<dbReference type="Pfam" id="PF07365">
    <property type="entry name" value="Toxin_8"/>
    <property type="match status" value="1"/>
</dbReference>
<feature type="propeptide" id="PRO_0000377451" evidence="1">
    <location>
        <begin position="1" status="less than"/>
        <end position="19"/>
    </location>
</feature>
<feature type="peptide" id="PRO_0000377452" description="Alpha-conotoxin-like Qc1.4b">
    <location>
        <begin position="20"/>
        <end position="36"/>
    </location>
</feature>
<feature type="propeptide" id="PRO_0000377453" evidence="1">
    <location>
        <begin position="37"/>
        <end position="40"/>
    </location>
</feature>
<feature type="region of interest" description="Lacks the Ser-Xaa-Pro motif that is crucial for potent interaction with nAChR" evidence="4">
    <location>
        <begin position="24"/>
        <end position="26"/>
    </location>
</feature>
<feature type="modified residue" description="Cysteine amide" evidence="1">
    <location>
        <position position="36"/>
    </location>
</feature>
<feature type="disulfide bond" evidence="2">
    <location>
        <begin position="22"/>
        <end position="28"/>
    </location>
</feature>
<feature type="disulfide bond" evidence="2">
    <location>
        <begin position="23"/>
        <end position="36"/>
    </location>
</feature>
<feature type="non-terminal residue">
    <location>
        <position position="1"/>
    </location>
</feature>
<protein>
    <recommendedName>
        <fullName>Alpha-conotoxin-like Qc1.4b</fullName>
    </recommendedName>
</protein>
<sequence length="40" mass="4053">SDGRNTAANDKASDLMALRDGCCPNPSCSVNNPDICGGGR</sequence>
<evidence type="ECO:0000250" key="1"/>
<evidence type="ECO:0000250" key="2">
    <source>
        <dbReference type="UniProtKB" id="P56636"/>
    </source>
</evidence>
<evidence type="ECO:0000250" key="3">
    <source>
        <dbReference type="UniProtKB" id="Q2I2R8"/>
    </source>
</evidence>
<evidence type="ECO:0000305" key="4"/>
<keyword id="KW-0008">Acetylcholine receptor inhibiting toxin</keyword>
<keyword id="KW-0027">Amidation</keyword>
<keyword id="KW-1015">Disulfide bond</keyword>
<keyword id="KW-0872">Ion channel impairing toxin</keyword>
<keyword id="KW-0528">Neurotoxin</keyword>
<keyword id="KW-0629">Postsynaptic neurotoxin</keyword>
<keyword id="KW-0964">Secreted</keyword>
<keyword id="KW-0800">Toxin</keyword>
<organism>
    <name type="scientific">Conus quercinus</name>
    <name type="common">Oak cone</name>
    <dbReference type="NCBI Taxonomy" id="101313"/>
    <lineage>
        <taxon>Eukaryota</taxon>
        <taxon>Metazoa</taxon>
        <taxon>Spiralia</taxon>
        <taxon>Lophotrochozoa</taxon>
        <taxon>Mollusca</taxon>
        <taxon>Gastropoda</taxon>
        <taxon>Caenogastropoda</taxon>
        <taxon>Neogastropoda</taxon>
        <taxon>Conoidea</taxon>
        <taxon>Conidae</taxon>
        <taxon>Conus</taxon>
        <taxon>Lividoconus</taxon>
    </lineage>
</organism>
<accession>P0CAQ9</accession>
<accession>A1X8C8</accession>
<accession>A1X8C9</accession>